<protein>
    <recommendedName>
        <fullName>Beta-lactamase CTX-M-6</fullName>
        <ecNumber>3.5.2.6</ecNumber>
    </recommendedName>
    <alternativeName>
        <fullName>Cefotaximase 6</fullName>
    </alternativeName>
</protein>
<proteinExistence type="inferred from homology"/>
<feature type="signal peptide" evidence="1">
    <location>
        <begin position="1"/>
        <end position="28"/>
    </location>
</feature>
<feature type="chain" id="PRO_0000016993" description="Beta-lactamase CTX-M-6">
    <location>
        <begin position="29"/>
        <end position="291"/>
    </location>
</feature>
<feature type="active site" description="Acyl-ester intermediate" evidence="2">
    <location>
        <position position="73"/>
    </location>
</feature>
<feature type="binding site" evidence="1">
    <location>
        <begin position="237"/>
        <end position="239"/>
    </location>
    <ligand>
        <name>substrate</name>
    </ligand>
</feature>
<comment type="function">
    <text>Has cefotaxime-hydrolyzing activity.</text>
</comment>
<comment type="catalytic activity">
    <reaction evidence="2">
        <text>a beta-lactam + H2O = a substituted beta-amino acid</text>
        <dbReference type="Rhea" id="RHEA:20401"/>
        <dbReference type="ChEBI" id="CHEBI:15377"/>
        <dbReference type="ChEBI" id="CHEBI:35627"/>
        <dbReference type="ChEBI" id="CHEBI:140347"/>
        <dbReference type="EC" id="3.5.2.6"/>
    </reaction>
</comment>
<comment type="miscellaneous">
    <text evidence="4">The class A beta-lactamase family has a specific amino-acid numbering system, sometimes called Ambler or ABL numbering and often misspelt as Amber. A multiple sequence alignment was used to derive a consensus sequence and then the consensus was numbered taking into account insertions and deletions. This allows use of identical numbers, e.g. for active site residues, despite differences in protein length. UniProt always uses natural numbering of residues, hence there appear to be differences in numbering between this entry and some papers.</text>
</comment>
<comment type="similarity">
    <text evidence="3">Belongs to the class-A beta-lactamase family.</text>
</comment>
<dbReference type="EC" id="3.5.2.6"/>
<dbReference type="EMBL" id="AJ005045">
    <property type="protein sequence ID" value="CAA06312.1"/>
    <property type="molecule type" value="Genomic_DNA"/>
</dbReference>
<dbReference type="RefSeq" id="WP_032489171.1">
    <property type="nucleotide sequence ID" value="NG_049021.1"/>
</dbReference>
<dbReference type="SMR" id="O65976"/>
<dbReference type="CARD" id="ARO:3001870">
    <property type="molecule name" value="CTX-M-7"/>
    <property type="mechanism identifier" value="ARO:0001004"/>
    <property type="mechanism name" value="antibiotic inactivation"/>
</dbReference>
<dbReference type="KEGG" id="ag:CAA06312"/>
<dbReference type="GO" id="GO:0008800">
    <property type="term" value="F:beta-lactamase activity"/>
    <property type="evidence" value="ECO:0007669"/>
    <property type="project" value="UniProtKB-EC"/>
</dbReference>
<dbReference type="GO" id="GO:0030655">
    <property type="term" value="P:beta-lactam antibiotic catabolic process"/>
    <property type="evidence" value="ECO:0007669"/>
    <property type="project" value="InterPro"/>
</dbReference>
<dbReference type="GO" id="GO:0046677">
    <property type="term" value="P:response to antibiotic"/>
    <property type="evidence" value="ECO:0007669"/>
    <property type="project" value="UniProtKB-KW"/>
</dbReference>
<dbReference type="Gene3D" id="3.40.710.10">
    <property type="entry name" value="DD-peptidase/beta-lactamase superfamily"/>
    <property type="match status" value="1"/>
</dbReference>
<dbReference type="InterPro" id="IPR012338">
    <property type="entry name" value="Beta-lactam/transpept-like"/>
</dbReference>
<dbReference type="InterPro" id="IPR045155">
    <property type="entry name" value="Beta-lactam_cat"/>
</dbReference>
<dbReference type="InterPro" id="IPR000871">
    <property type="entry name" value="Beta-lactam_class-A"/>
</dbReference>
<dbReference type="InterPro" id="IPR023650">
    <property type="entry name" value="Beta-lactam_class-A_AS"/>
</dbReference>
<dbReference type="NCBIfam" id="NF033103">
    <property type="entry name" value="bla_class_A"/>
    <property type="match status" value="1"/>
</dbReference>
<dbReference type="NCBIfam" id="NF033089">
    <property type="entry name" value="blaCTX-M"/>
    <property type="match status" value="1"/>
</dbReference>
<dbReference type="PANTHER" id="PTHR35333">
    <property type="entry name" value="BETA-LACTAMASE"/>
    <property type="match status" value="1"/>
</dbReference>
<dbReference type="PANTHER" id="PTHR35333:SF3">
    <property type="entry name" value="BETA-LACTAMASE-TYPE TRANSPEPTIDASE FOLD CONTAINING PROTEIN"/>
    <property type="match status" value="1"/>
</dbReference>
<dbReference type="Pfam" id="PF13354">
    <property type="entry name" value="Beta-lactamase2"/>
    <property type="match status" value="1"/>
</dbReference>
<dbReference type="PRINTS" id="PR00118">
    <property type="entry name" value="BLACTAMASEA"/>
</dbReference>
<dbReference type="SUPFAM" id="SSF56601">
    <property type="entry name" value="beta-lactamase/transpeptidase-like"/>
    <property type="match status" value="1"/>
</dbReference>
<dbReference type="PROSITE" id="PS00146">
    <property type="entry name" value="BETA_LACTAMASE_A"/>
    <property type="match status" value="1"/>
</dbReference>
<geneLocation type="plasmid">
    <name>pAS31</name>
</geneLocation>
<sequence length="291" mass="31207">MMTQSIRRSMLTVMATLPLLFSSATLHAQANSVQQQLEALEKSSGGRLGVALINTADNSQILYVADERFAMCSTSKVMAAAAVLKQSESDKHLLNQRVEIRASDLVNYNPIAEKHVNGTMTLAQLGAGALQYSDNTAMNKLIAHLGGPDKVTAFARSLGDETFRLDRTEPTLNSAIPGDPRDTTTPLAMAQTLKNLTLGKALAETQRAQLVTWLKGNTTGSASIRAGLPKSWGVGDKTGSGDYGTTNDIAVIWPENHAPLVLVTYFTQPEQKAESRRDVLAAAAKIVTHGF</sequence>
<reference key="1">
    <citation type="journal article" date="1998" name="FEMS Microbiol. Lett.">
        <title>Two novel plasmid-mediated cefotaxime-hydrolyzing beta-lactamases (CTX-M-5 and CTX-M-6) from Salmonella typhimurium.</title>
        <authorList>
            <person name="Gazouli M."/>
            <person name="Tzelepi E."/>
            <person name="Markogiannakis A."/>
            <person name="Legakis N.J."/>
            <person name="Tzouvelekis L.S."/>
        </authorList>
    </citation>
    <scope>NUCLEOTIDE SEQUENCE [GENOMIC DNA]</scope>
    <source>
        <strain>AS31</strain>
    </source>
</reference>
<reference key="2">
    <citation type="journal article" date="1991" name="Biochem. J.">
        <title>A standard numbering scheme for the class A beta-lactamases.</title>
        <authorList>
            <person name="Ambler R.P."/>
            <person name="Coulson A.F."/>
            <person name="Frere J.M."/>
            <person name="Ghuysen J.M."/>
            <person name="Joris B."/>
            <person name="Forsman M."/>
            <person name="Levesque R.C."/>
            <person name="Tiraby G."/>
            <person name="Waley S.G."/>
        </authorList>
    </citation>
    <scope>AMINO ACID NUMBERING SCHEME</scope>
</reference>
<gene>
    <name type="primary">bla</name>
</gene>
<accession>O65976</accession>
<organism>
    <name type="scientific">Salmonella typhimurium</name>
    <dbReference type="NCBI Taxonomy" id="90371"/>
    <lineage>
        <taxon>Bacteria</taxon>
        <taxon>Pseudomonadati</taxon>
        <taxon>Pseudomonadota</taxon>
        <taxon>Gammaproteobacteria</taxon>
        <taxon>Enterobacterales</taxon>
        <taxon>Enterobacteriaceae</taxon>
        <taxon>Salmonella</taxon>
    </lineage>
</organism>
<keyword id="KW-0046">Antibiotic resistance</keyword>
<keyword id="KW-0378">Hydrolase</keyword>
<keyword id="KW-0614">Plasmid</keyword>
<keyword id="KW-0732">Signal</keyword>
<name>BLC6_SALTM</name>
<evidence type="ECO:0000250" key="1"/>
<evidence type="ECO:0000255" key="2">
    <source>
        <dbReference type="PROSITE-ProRule" id="PRU10101"/>
    </source>
</evidence>
<evidence type="ECO:0000305" key="3"/>
<evidence type="ECO:0000305" key="4">
    <source>
    </source>
</evidence>